<keyword id="KW-0068">Autocatalytic cleavage</keyword>
<keyword id="KW-0325">Glycoprotein</keyword>
<keyword id="KW-0378">Hydrolase</keyword>
<keyword id="KW-0645">Protease</keyword>
<keyword id="KW-1185">Reference proteome</keyword>
<keyword id="KW-0964">Secreted</keyword>
<keyword id="KW-0720">Serine protease</keyword>
<keyword id="KW-0732">Signal</keyword>
<keyword id="KW-0865">Zymogen</keyword>
<comment type="subcellular location">
    <subcellularLocation>
        <location evidence="2">Secreted</location>
    </subcellularLocation>
</comment>
<comment type="similarity">
    <text evidence="10">Belongs to the peptidase S8 family.</text>
</comment>
<protein>
    <recommendedName>
        <fullName evidence="9">Subtilisin-like protease SBT1.4</fullName>
        <ecNumber evidence="7">3.4.21.-</ecNumber>
    </recommendedName>
    <alternativeName>
        <fullName evidence="9">Subtilase subfamily 1 member 4</fullName>
        <shortName evidence="9">AtSBT1.4</shortName>
    </alternativeName>
</protein>
<name>SBT14_ARATH</name>
<reference key="1">
    <citation type="journal article" date="2000" name="DNA Res.">
        <title>Structural analysis of Arabidopsis thaliana chromosome 3. I. Sequence features of the regions of 4,504,864 bp covered by sixty P1 and TAC clones.</title>
        <authorList>
            <person name="Sato S."/>
            <person name="Nakamura Y."/>
            <person name="Kaneko T."/>
            <person name="Katoh T."/>
            <person name="Asamizu E."/>
            <person name="Tabata S."/>
        </authorList>
    </citation>
    <scope>NUCLEOTIDE SEQUENCE [LARGE SCALE GENOMIC DNA]</scope>
    <source>
        <strain>cv. Columbia</strain>
    </source>
</reference>
<reference key="2">
    <citation type="journal article" date="2000" name="DNA Res.">
        <title>Structural analysis of Arabidopsis thaliana chromosome 3. II. Sequence features of the 4,251,695 bp regions covered by 90 P1, TAC and BAC clones.</title>
        <authorList>
            <person name="Kaneko T."/>
            <person name="Katoh T."/>
            <person name="Sato S."/>
            <person name="Nakamura Y."/>
            <person name="Asamizu E."/>
            <person name="Tabata S."/>
        </authorList>
    </citation>
    <scope>NUCLEOTIDE SEQUENCE [LARGE SCALE GENOMIC DNA]</scope>
    <source>
        <strain>cv. Columbia</strain>
    </source>
</reference>
<reference key="3">
    <citation type="journal article" date="2017" name="Plant J.">
        <title>Araport11: a complete reannotation of the Arabidopsis thaliana reference genome.</title>
        <authorList>
            <person name="Cheng C.Y."/>
            <person name="Krishnakumar V."/>
            <person name="Chan A.P."/>
            <person name="Thibaud-Nissen F."/>
            <person name="Schobel S."/>
            <person name="Town C.D."/>
        </authorList>
    </citation>
    <scope>GENOME REANNOTATION</scope>
    <source>
        <strain>cv. Columbia</strain>
    </source>
</reference>
<reference key="4">
    <citation type="submission" date="2004-03" db="EMBL/GenBank/DDBJ databases">
        <title>Arabidopsis ORF clones.</title>
        <authorList>
            <person name="Cheuk R.F."/>
            <person name="Chen H."/>
            <person name="Kim C.J."/>
            <person name="Shinn P."/>
            <person name="Ecker J.R."/>
        </authorList>
    </citation>
    <scope>NUCLEOTIDE SEQUENCE [LARGE SCALE MRNA]</scope>
    <source>
        <strain>cv. Columbia</strain>
    </source>
</reference>
<reference key="5">
    <citation type="submission" date="2006-07" db="EMBL/GenBank/DDBJ databases">
        <title>Large-scale analysis of RIKEN Arabidopsis full-length (RAFL) cDNAs.</title>
        <authorList>
            <person name="Totoki Y."/>
            <person name="Seki M."/>
            <person name="Ishida J."/>
            <person name="Nakajima M."/>
            <person name="Enju A."/>
            <person name="Kamiya A."/>
            <person name="Narusaka M."/>
            <person name="Shin-i T."/>
            <person name="Nakagawa M."/>
            <person name="Sakamoto N."/>
            <person name="Oishi K."/>
            <person name="Kohara Y."/>
            <person name="Kobayashi M."/>
            <person name="Toyoda A."/>
            <person name="Sakaki Y."/>
            <person name="Sakurai T."/>
            <person name="Iida K."/>
            <person name="Akiyama K."/>
            <person name="Satou M."/>
            <person name="Toyoda T."/>
            <person name="Konagaya A."/>
            <person name="Carninci P."/>
            <person name="Kawai J."/>
            <person name="Hayashizaki Y."/>
            <person name="Shinozaki K."/>
        </authorList>
    </citation>
    <scope>NUCLEOTIDE SEQUENCE [LARGE SCALE MRNA]</scope>
    <source>
        <strain>cv. Columbia</strain>
    </source>
</reference>
<reference key="6">
    <citation type="journal article" date="2009" name="DNA Res.">
        <title>Analysis of multiple occurrences of alternative splicing events in Arabidopsis thaliana using novel sequenced full-length cDNAs.</title>
        <authorList>
            <person name="Iida K."/>
            <person name="Fukami-Kobayashi K."/>
            <person name="Toyoda A."/>
            <person name="Sakaki Y."/>
            <person name="Kobayashi M."/>
            <person name="Seki M."/>
            <person name="Shinozaki K."/>
        </authorList>
    </citation>
    <scope>NUCLEOTIDE SEQUENCE [LARGE SCALE MRNA] OF 177-777</scope>
    <source>
        <strain>cv. Columbia</strain>
        <tissue>Flower</tissue>
        <tissue>Silique</tissue>
    </source>
</reference>
<reference key="7">
    <citation type="journal article" date="2005" name="PLoS Comput. Biol.">
        <title>Inferring hypotheses on functional relationships of genes: Analysis of the Arabidopsis thaliana subtilase gene family.</title>
        <authorList>
            <person name="Rautengarten C."/>
            <person name="Steinhauser D."/>
            <person name="Bussis D."/>
            <person name="Stintzi A."/>
            <person name="Schaller A."/>
            <person name="Kopka J."/>
            <person name="Altmann T."/>
        </authorList>
    </citation>
    <scope>GENE FAMILY</scope>
    <scope>NOMENCLATURE</scope>
</reference>
<organism>
    <name type="scientific">Arabidopsis thaliana</name>
    <name type="common">Mouse-ear cress</name>
    <dbReference type="NCBI Taxonomy" id="3702"/>
    <lineage>
        <taxon>Eukaryota</taxon>
        <taxon>Viridiplantae</taxon>
        <taxon>Streptophyta</taxon>
        <taxon>Embryophyta</taxon>
        <taxon>Tracheophyta</taxon>
        <taxon>Spermatophyta</taxon>
        <taxon>Magnoliopsida</taxon>
        <taxon>eudicotyledons</taxon>
        <taxon>Gunneridae</taxon>
        <taxon>Pentapetalae</taxon>
        <taxon>rosids</taxon>
        <taxon>malvids</taxon>
        <taxon>Brassicales</taxon>
        <taxon>Brassicaceae</taxon>
        <taxon>Camelineae</taxon>
        <taxon>Arabidopsis</taxon>
    </lineage>
</organism>
<evidence type="ECO:0000250" key="1">
    <source>
        <dbReference type="UniProtKB" id="Q39547"/>
    </source>
</evidence>
<evidence type="ECO:0000250" key="2">
    <source>
        <dbReference type="UniProtKB" id="Q84WS0"/>
    </source>
</evidence>
<evidence type="ECO:0000250" key="3">
    <source>
        <dbReference type="UniProtKB" id="Q9MAP7"/>
    </source>
</evidence>
<evidence type="ECO:0000255" key="4"/>
<evidence type="ECO:0000255" key="5">
    <source>
        <dbReference type="PROSITE-ProRule" id="PRU00498"/>
    </source>
</evidence>
<evidence type="ECO:0000255" key="6">
    <source>
        <dbReference type="PROSITE-ProRule" id="PRU01240"/>
    </source>
</evidence>
<evidence type="ECO:0000255" key="7">
    <source>
        <dbReference type="PROSITE-ProRule" id="PRU10082"/>
    </source>
</evidence>
<evidence type="ECO:0000256" key="8">
    <source>
        <dbReference type="SAM" id="MobiDB-lite"/>
    </source>
</evidence>
<evidence type="ECO:0000303" key="9">
    <source>
    </source>
</evidence>
<evidence type="ECO:0000305" key="10"/>
<evidence type="ECO:0000312" key="11">
    <source>
        <dbReference type="Araport" id="AT3G14067"/>
    </source>
</evidence>
<evidence type="ECO:0000312" key="12">
    <source>
        <dbReference type="EMBL" id="BAB02339.1"/>
    </source>
</evidence>
<dbReference type="EC" id="3.4.21.-" evidence="7"/>
<dbReference type="EMBL" id="AB019229">
    <property type="protein sequence ID" value="BAB02339.1"/>
    <property type="molecule type" value="Genomic_DNA"/>
</dbReference>
<dbReference type="EMBL" id="AP000600">
    <property type="protein sequence ID" value="BAB02339.1"/>
    <property type="status" value="JOINED"/>
    <property type="molecule type" value="Genomic_DNA"/>
</dbReference>
<dbReference type="EMBL" id="CP002686">
    <property type="protein sequence ID" value="AEE75461.1"/>
    <property type="molecule type" value="Genomic_DNA"/>
</dbReference>
<dbReference type="EMBL" id="BT011692">
    <property type="protein sequence ID" value="AAS49055.1"/>
    <property type="molecule type" value="mRNA"/>
</dbReference>
<dbReference type="EMBL" id="BT012275">
    <property type="protein sequence ID" value="AAS76762.1"/>
    <property type="molecule type" value="mRNA"/>
</dbReference>
<dbReference type="EMBL" id="AK226374">
    <property type="protein sequence ID" value="BAE98521.1"/>
    <property type="molecule type" value="mRNA"/>
</dbReference>
<dbReference type="EMBL" id="AK229057">
    <property type="protein sequence ID" value="BAF00939.1"/>
    <property type="molecule type" value="mRNA"/>
</dbReference>
<dbReference type="EMBL" id="AK317689">
    <property type="protein sequence ID" value="BAH20348.1"/>
    <property type="molecule type" value="mRNA"/>
</dbReference>
<dbReference type="RefSeq" id="NP_566473.2">
    <property type="nucleotide sequence ID" value="NM_112261.4"/>
</dbReference>
<dbReference type="SMR" id="Q9LVJ1"/>
<dbReference type="FunCoup" id="Q9LVJ1">
    <property type="interactions" value="460"/>
</dbReference>
<dbReference type="IntAct" id="Q9LVJ1">
    <property type="interactions" value="1"/>
</dbReference>
<dbReference type="STRING" id="3702.Q9LVJ1"/>
<dbReference type="MEROPS" id="S08.A28"/>
<dbReference type="GlyCosmos" id="Q9LVJ1">
    <property type="glycosylation" value="3 sites, No reported glycans"/>
</dbReference>
<dbReference type="GlyGen" id="Q9LVJ1">
    <property type="glycosylation" value="3 sites"/>
</dbReference>
<dbReference type="iPTMnet" id="Q9LVJ1"/>
<dbReference type="PaxDb" id="3702-AT3G14067.1"/>
<dbReference type="ProMEX" id="Q9LVJ1"/>
<dbReference type="ProteomicsDB" id="232929"/>
<dbReference type="EnsemblPlants" id="AT3G14067.1">
    <property type="protein sequence ID" value="AT3G14067.1"/>
    <property type="gene ID" value="AT3G14067"/>
</dbReference>
<dbReference type="GeneID" id="820621"/>
<dbReference type="Gramene" id="AT3G14067.1">
    <property type="protein sequence ID" value="AT3G14067.1"/>
    <property type="gene ID" value="AT3G14067"/>
</dbReference>
<dbReference type="KEGG" id="ath:AT3G14067"/>
<dbReference type="Araport" id="AT3G14067"/>
<dbReference type="TAIR" id="AT3G14067">
    <property type="gene designation" value="SASP"/>
</dbReference>
<dbReference type="eggNOG" id="ENOG502QZDA">
    <property type="taxonomic scope" value="Eukaryota"/>
</dbReference>
<dbReference type="HOGENOM" id="CLU_000625_4_6_1"/>
<dbReference type="InParanoid" id="Q9LVJ1"/>
<dbReference type="OMA" id="CWSLGCF"/>
<dbReference type="PhylomeDB" id="Q9LVJ1"/>
<dbReference type="BRENDA" id="3.4.21.62">
    <property type="organism ID" value="399"/>
</dbReference>
<dbReference type="PRO" id="PR:Q9LVJ1"/>
<dbReference type="Proteomes" id="UP000006548">
    <property type="component" value="Chromosome 3"/>
</dbReference>
<dbReference type="ExpressionAtlas" id="Q9LVJ1">
    <property type="expression patterns" value="baseline and differential"/>
</dbReference>
<dbReference type="GO" id="GO:0048046">
    <property type="term" value="C:apoplast"/>
    <property type="evidence" value="ECO:0007005"/>
    <property type="project" value="TAIR"/>
</dbReference>
<dbReference type="GO" id="GO:0005829">
    <property type="term" value="C:cytosol"/>
    <property type="evidence" value="ECO:0007005"/>
    <property type="project" value="TAIR"/>
</dbReference>
<dbReference type="GO" id="GO:0000325">
    <property type="term" value="C:plant-type vacuole"/>
    <property type="evidence" value="ECO:0007005"/>
    <property type="project" value="TAIR"/>
</dbReference>
<dbReference type="GO" id="GO:0099503">
    <property type="term" value="C:secretory vesicle"/>
    <property type="evidence" value="ECO:0007005"/>
    <property type="project" value="TAIR"/>
</dbReference>
<dbReference type="GO" id="GO:0004252">
    <property type="term" value="F:serine-type endopeptidase activity"/>
    <property type="evidence" value="ECO:0007669"/>
    <property type="project" value="InterPro"/>
</dbReference>
<dbReference type="GO" id="GO:0010150">
    <property type="term" value="P:leaf senescence"/>
    <property type="evidence" value="ECO:0000270"/>
    <property type="project" value="TAIR"/>
</dbReference>
<dbReference type="GO" id="GO:0006508">
    <property type="term" value="P:proteolysis"/>
    <property type="evidence" value="ECO:0007669"/>
    <property type="project" value="UniProtKB-KW"/>
</dbReference>
<dbReference type="GO" id="GO:0010223">
    <property type="term" value="P:secondary shoot formation"/>
    <property type="evidence" value="ECO:0000315"/>
    <property type="project" value="TAIR"/>
</dbReference>
<dbReference type="CDD" id="cd02120">
    <property type="entry name" value="PA_subtilisin_like"/>
    <property type="match status" value="1"/>
</dbReference>
<dbReference type="CDD" id="cd04852">
    <property type="entry name" value="Peptidases_S8_3"/>
    <property type="match status" value="1"/>
</dbReference>
<dbReference type="FunFam" id="2.60.40.2310:FF:000001">
    <property type="entry name" value="Subtilisin-like protease SBT1.5"/>
    <property type="match status" value="1"/>
</dbReference>
<dbReference type="FunFam" id="3.40.50.200:FF:000006">
    <property type="entry name" value="Subtilisin-like protease SBT1.5"/>
    <property type="match status" value="1"/>
</dbReference>
<dbReference type="FunFam" id="3.50.30.30:FF:000005">
    <property type="entry name" value="subtilisin-like protease SBT1.5"/>
    <property type="match status" value="1"/>
</dbReference>
<dbReference type="FunFam" id="3.30.70.80:FF:000003">
    <property type="entry name" value="Subtilisin-like protease SBT1.9"/>
    <property type="match status" value="1"/>
</dbReference>
<dbReference type="Gene3D" id="2.60.40.2310">
    <property type="match status" value="1"/>
</dbReference>
<dbReference type="Gene3D" id="3.50.30.30">
    <property type="match status" value="1"/>
</dbReference>
<dbReference type="Gene3D" id="3.30.70.80">
    <property type="entry name" value="Peptidase S8 propeptide/proteinase inhibitor I9"/>
    <property type="match status" value="1"/>
</dbReference>
<dbReference type="Gene3D" id="3.40.50.200">
    <property type="entry name" value="Peptidase S8/S53 domain"/>
    <property type="match status" value="1"/>
</dbReference>
<dbReference type="InterPro" id="IPR046450">
    <property type="entry name" value="PA_dom_sf"/>
</dbReference>
<dbReference type="InterPro" id="IPR003137">
    <property type="entry name" value="PA_domain"/>
</dbReference>
<dbReference type="InterPro" id="IPR000209">
    <property type="entry name" value="Peptidase_S8/S53_dom"/>
</dbReference>
<dbReference type="InterPro" id="IPR036852">
    <property type="entry name" value="Peptidase_S8/S53_dom_sf"/>
</dbReference>
<dbReference type="InterPro" id="IPR023827">
    <property type="entry name" value="Peptidase_S8_Asp-AS"/>
</dbReference>
<dbReference type="InterPro" id="IPR023828">
    <property type="entry name" value="Peptidase_S8_Ser-AS"/>
</dbReference>
<dbReference type="InterPro" id="IPR015500">
    <property type="entry name" value="Peptidase_S8_subtilisin-rel"/>
</dbReference>
<dbReference type="InterPro" id="IPR034197">
    <property type="entry name" value="Peptidases_S8_3"/>
</dbReference>
<dbReference type="InterPro" id="IPR010259">
    <property type="entry name" value="S8pro/Inhibitor_I9"/>
</dbReference>
<dbReference type="InterPro" id="IPR037045">
    <property type="entry name" value="S8pro/Inhibitor_I9_sf"/>
</dbReference>
<dbReference type="InterPro" id="IPR045051">
    <property type="entry name" value="SBT"/>
</dbReference>
<dbReference type="InterPro" id="IPR041469">
    <property type="entry name" value="Subtilisin-like_FN3"/>
</dbReference>
<dbReference type="PANTHER" id="PTHR10795">
    <property type="entry name" value="PROPROTEIN CONVERTASE SUBTILISIN/KEXIN"/>
    <property type="match status" value="1"/>
</dbReference>
<dbReference type="Pfam" id="PF17766">
    <property type="entry name" value="fn3_6"/>
    <property type="match status" value="1"/>
</dbReference>
<dbReference type="Pfam" id="PF05922">
    <property type="entry name" value="Inhibitor_I9"/>
    <property type="match status" value="1"/>
</dbReference>
<dbReference type="Pfam" id="PF02225">
    <property type="entry name" value="PA"/>
    <property type="match status" value="1"/>
</dbReference>
<dbReference type="Pfam" id="PF00082">
    <property type="entry name" value="Peptidase_S8"/>
    <property type="match status" value="1"/>
</dbReference>
<dbReference type="PRINTS" id="PR00723">
    <property type="entry name" value="SUBTILISIN"/>
</dbReference>
<dbReference type="SUPFAM" id="SSF52025">
    <property type="entry name" value="PA domain"/>
    <property type="match status" value="1"/>
</dbReference>
<dbReference type="SUPFAM" id="SSF52743">
    <property type="entry name" value="Subtilisin-like"/>
    <property type="match status" value="1"/>
</dbReference>
<dbReference type="PROSITE" id="PS51892">
    <property type="entry name" value="SUBTILASE"/>
    <property type="match status" value="1"/>
</dbReference>
<dbReference type="PROSITE" id="PS00136">
    <property type="entry name" value="SUBTILASE_ASP"/>
    <property type="match status" value="1"/>
</dbReference>
<dbReference type="PROSITE" id="PS00138">
    <property type="entry name" value="SUBTILASE_SER"/>
    <property type="match status" value="1"/>
</dbReference>
<gene>
    <name evidence="9" type="primary">SBT1.4</name>
    <name evidence="11" type="ordered locus">At3g14067</name>
    <name evidence="12" type="ORF">MDC16.21</name>
</gene>
<proteinExistence type="evidence at transcript level"/>
<sequence>MAKLSLSSIFFVFPLLLCFFSPSSSSSDGLESYIVHVQRSHKPSLFSSHNNWHVSLLRSLPSSPQPATLLYSYSRAVHGFSARLSPIQTAALRRHPSVISVIPDQAREIHTTHTPAFLGFSQNSGLWSNSNYGEDVIVGVLDTGIWPEHPSFSDSGLGPIPSTWKGECEIGPDFPASSCNRKLIGARAFYRGYLTQRNGTKKHAAKESRSPRDTEGHGTHTASTAAGSVVANASLYQYARGTATGMASKARIAAYKICWTGGCYDSDILAAMDQAVADGVHVISLSVGASGSAPEYHTDSIAIGAFGATRHGIVVSCSAGNSGPNPETATNIAPWILTVGASTVDREFAANAITGDGKVFTGTSLYAGESLPDSQLSLVYSGDCGSRLCYPGKLNSSLVEGKIVLCDRGGNARVEKGSAVKLAGGAGMILANTAESGEELTADSHLVPATMVGAKAGDQIRDYIKTSDSPTAKISFLGTLIGPSPPSPRVAAFSSRGPNHLTPVILKPDVIAPGVNILAGWTGMVGPTDLDIDPRRVQFNIISGTSMSCPHVSGLAALLRKAHPDWSPAAIKSALVTTAYDVENSGEPIEDLATGKSSNSFIHGAGHVDPNKALNPGLVYDIEVKEYVAFLCAVGYEFPGILVFLQDPTLYDACETSKLRTAGDLNYPSFSVVFASTGEVVKYKRVVKNVGSNVDAVYEVGVKSPANVEIDVSPSKLAFSKEKSVLEYEVTFKSVVLGGGVGSVPGHEFGSIEWTDGEHVVKSPVAVQWGQGSVQSF</sequence>
<feature type="signal peptide" evidence="4">
    <location>
        <begin position="1"/>
        <end position="25"/>
    </location>
</feature>
<feature type="propeptide" id="PRO_0000435172" description="Activation peptide" evidence="3">
    <location>
        <begin position="26"/>
        <end position="110"/>
    </location>
</feature>
<feature type="chain" id="PRO_5004329314" description="Subtilisin-like protease SBT1.4">
    <location>
        <begin position="111"/>
        <end status="unknown"/>
    </location>
</feature>
<feature type="propeptide" id="PRO_0000435173" evidence="1">
    <location>
        <begin status="unknown"/>
        <end position="777"/>
    </location>
</feature>
<feature type="domain" description="Inhibitor I9" evidence="4">
    <location>
        <begin position="32"/>
        <end position="110"/>
    </location>
</feature>
<feature type="domain" description="Peptidase S8" evidence="6">
    <location>
        <begin position="115"/>
        <end position="614"/>
    </location>
</feature>
<feature type="domain" description="PA" evidence="4">
    <location>
        <begin position="376"/>
        <end position="461"/>
    </location>
</feature>
<feature type="region of interest" description="Disordered" evidence="8">
    <location>
        <begin position="199"/>
        <end position="223"/>
    </location>
</feature>
<feature type="compositionally biased region" description="Basic and acidic residues" evidence="8">
    <location>
        <begin position="205"/>
        <end position="218"/>
    </location>
</feature>
<feature type="active site" description="Charge relay system" evidence="6">
    <location>
        <position position="142"/>
    </location>
</feature>
<feature type="active site" description="Charge relay system" evidence="6">
    <location>
        <position position="217"/>
    </location>
</feature>
<feature type="active site" description="Charge relay system" evidence="6">
    <location>
        <position position="546"/>
    </location>
</feature>
<feature type="glycosylation site" description="N-linked (GlcNAc...) asparagine" evidence="5">
    <location>
        <position position="198"/>
    </location>
</feature>
<feature type="glycosylation site" description="N-linked (GlcNAc...) asparagine" evidence="5">
    <location>
        <position position="232"/>
    </location>
</feature>
<feature type="glycosylation site" description="N-linked (GlcNAc...) asparagine" evidence="5">
    <location>
        <position position="395"/>
    </location>
</feature>
<feature type="sequence conflict" description="In Ref. 5; BAE98521." evidence="10" ref="5">
    <original>K</original>
    <variation>M</variation>
    <location>
        <position position="206"/>
    </location>
</feature>
<feature type="sequence conflict" description="In Ref. 6; BAH20348." evidence="10" ref="6">
    <original>E</original>
    <variation>D</variation>
    <location>
        <position position="655"/>
    </location>
</feature>
<accession>Q9LVJ1</accession>
<accession>B9DHY1</accession>
<accession>Q0WWH7</accession>